<gene>
    <name evidence="1" type="primary">MT-ATP8</name>
    <name type="synonym">ATP8</name>
    <name type="synonym">ATPASE8</name>
    <name type="synonym">MTATP8</name>
</gene>
<keyword id="KW-0066">ATP synthesis</keyword>
<keyword id="KW-0138">CF(0)</keyword>
<keyword id="KW-0375">Hydrogen ion transport</keyword>
<keyword id="KW-0406">Ion transport</keyword>
<keyword id="KW-0472">Membrane</keyword>
<keyword id="KW-0496">Mitochondrion</keyword>
<keyword id="KW-0812">Transmembrane</keyword>
<keyword id="KW-1133">Transmembrane helix</keyword>
<keyword id="KW-0813">Transport</keyword>
<sequence>MPQLNPNPWFYIMLMSWLTFSLIIQPKLLSFTSANPPSNKTSTTTRTLPWTWPWT</sequence>
<comment type="function">
    <text evidence="1 2">Subunit 8, of the mitochondrial membrane ATP synthase complex (F(1)F(0) ATP synthase or Complex V) that produces ATP from ADP in the presence of a proton gradient across the membrane which is generated by electron transport complexes of the respiratory chain. ATP synthase complex consist of a soluble F(1) head domain - the catalytic core - and a membrane F(1) domain - the membrane proton channel. These two domains are linked by a central stalk rotating inside the F(1) region and a stationary peripheral stalk. During catalysis, ATP synthesis in the catalytic domain of F(1) is coupled via a rotary mechanism of the central stalk subunits to proton translocation (By similarity). In vivo, can only synthesize ATP although its ATP hydrolase activity can be activated artificially in vitro (By similarity). Part of the complex F(0) domain (By similarity).</text>
</comment>
<comment type="subunit">
    <text evidence="1">Component of the ATP synthase complex composed at least of ATP5F1A/subunit alpha, ATP5F1B/subunit beta, ATP5MC1/subunit c (homooctomer), MT-ATP6/subunit a, MT-ATP8/subunit 8, ATP5ME/subunit e, ATP5MF/subunit f, ATP5MG/subunit g, ATP5MK/subunit k, ATP5MJ/subunit j, ATP5F1C/subunit gamma, ATP5F1D/subunit delta, ATP5F1E/subunit epsilon, ATP5PF/subunit F6, ATP5PB/subunit b, ATP5PD/subunit d, ATP5PO/subunit OSCP. ATP synthase complex consists of a soluble F(1) head domain (subunits alpha(3) and beta(3)) - the catalytic core - and a membrane F(0) domain - the membrane proton channel (subunits c, a, 8, e, f, g, k and j). These two domains are linked by a central stalk (subunits gamma, delta, and epsilon) rotating inside the F1 region and a stationary peripheral stalk (subunits F6, b, d, and OSCP).</text>
</comment>
<comment type="subcellular location">
    <subcellularLocation>
        <location>Mitochondrion membrane</location>
        <topology>Single-pass membrane protein</topology>
    </subcellularLocation>
</comment>
<comment type="similarity">
    <text evidence="5">Belongs to the ATPase protein 8 family.</text>
</comment>
<reference key="1">
    <citation type="journal article" date="1999" name="Mol. Biol. Evol.">
        <title>Phylogenetic relationships of the enigmatic hoatzin (Opisthocomus hoazin) resolved using mitochondrial and nuclear gene sequences.</title>
        <authorList>
            <person name="Hughes J.M."/>
            <person name="Baker A.J."/>
        </authorList>
    </citation>
    <scope>NUCLEOTIDE SEQUENCE [GENOMIC DNA]</scope>
</reference>
<geneLocation type="mitochondrion"/>
<evidence type="ECO:0000250" key="1">
    <source>
        <dbReference type="UniProtKB" id="P03928"/>
    </source>
</evidence>
<evidence type="ECO:0000250" key="2">
    <source>
        <dbReference type="UniProtKB" id="P19483"/>
    </source>
</evidence>
<evidence type="ECO:0000255" key="3"/>
<evidence type="ECO:0000256" key="4">
    <source>
        <dbReference type="SAM" id="MobiDB-lite"/>
    </source>
</evidence>
<evidence type="ECO:0000305" key="5"/>
<dbReference type="EMBL" id="AF168039">
    <property type="protein sequence ID" value="AAD56467.1"/>
    <property type="molecule type" value="Genomic_DNA"/>
</dbReference>
<dbReference type="SMR" id="Q9TBI6"/>
<dbReference type="GO" id="GO:0031966">
    <property type="term" value="C:mitochondrial membrane"/>
    <property type="evidence" value="ECO:0007669"/>
    <property type="project" value="UniProtKB-SubCell"/>
</dbReference>
<dbReference type="GO" id="GO:0045259">
    <property type="term" value="C:proton-transporting ATP synthase complex"/>
    <property type="evidence" value="ECO:0007669"/>
    <property type="project" value="UniProtKB-KW"/>
</dbReference>
<dbReference type="GO" id="GO:0015078">
    <property type="term" value="F:proton transmembrane transporter activity"/>
    <property type="evidence" value="ECO:0007669"/>
    <property type="project" value="InterPro"/>
</dbReference>
<dbReference type="GO" id="GO:0015986">
    <property type="term" value="P:proton motive force-driven ATP synthesis"/>
    <property type="evidence" value="ECO:0007669"/>
    <property type="project" value="InterPro"/>
</dbReference>
<dbReference type="InterPro" id="IPR001421">
    <property type="entry name" value="ATP8_metazoa"/>
</dbReference>
<dbReference type="InterPro" id="IPR050635">
    <property type="entry name" value="ATPase_protein_8"/>
</dbReference>
<dbReference type="PANTHER" id="PTHR39937">
    <property type="entry name" value="ATP SYNTHASE PROTEIN 8"/>
    <property type="match status" value="1"/>
</dbReference>
<dbReference type="PANTHER" id="PTHR39937:SF1">
    <property type="entry name" value="ATP SYNTHASE PROTEIN 8"/>
    <property type="match status" value="1"/>
</dbReference>
<dbReference type="Pfam" id="PF00895">
    <property type="entry name" value="ATP-synt_8"/>
    <property type="match status" value="1"/>
</dbReference>
<accession>Q9TBI6</accession>
<protein>
    <recommendedName>
        <fullName evidence="1">ATP synthase F(0) complex subunit 8</fullName>
    </recommendedName>
    <alternativeName>
        <fullName>A6L</fullName>
    </alternativeName>
    <alternativeName>
        <fullName>F-ATPase subunit 8</fullName>
    </alternativeName>
</protein>
<organism>
    <name type="scientific">Corythaixoides concolor</name>
    <name type="common">Grey go-away-bird</name>
    <dbReference type="NCBI Taxonomy" id="103956"/>
    <lineage>
        <taxon>Eukaryota</taxon>
        <taxon>Metazoa</taxon>
        <taxon>Chordata</taxon>
        <taxon>Craniata</taxon>
        <taxon>Vertebrata</taxon>
        <taxon>Euteleostomi</taxon>
        <taxon>Archelosauria</taxon>
        <taxon>Archosauria</taxon>
        <taxon>Dinosauria</taxon>
        <taxon>Saurischia</taxon>
        <taxon>Theropoda</taxon>
        <taxon>Coelurosauria</taxon>
        <taxon>Aves</taxon>
        <taxon>Neognathae</taxon>
        <taxon>Neoaves</taxon>
        <taxon>Otidimorphae</taxon>
        <taxon>Musophagiformes</taxon>
        <taxon>Musophagidae</taxon>
        <taxon>Corythaixoides</taxon>
    </lineage>
</organism>
<name>ATP8_CORCN</name>
<feature type="chain" id="PRO_0000195512" description="ATP synthase F(0) complex subunit 8">
    <location>
        <begin position="1"/>
        <end position="55"/>
    </location>
</feature>
<feature type="transmembrane region" description="Helical" evidence="3">
    <location>
        <begin position="7"/>
        <end position="24"/>
    </location>
</feature>
<feature type="region of interest" description="Disordered" evidence="4">
    <location>
        <begin position="35"/>
        <end position="55"/>
    </location>
</feature>
<feature type="compositionally biased region" description="Low complexity" evidence="4">
    <location>
        <begin position="41"/>
        <end position="55"/>
    </location>
</feature>
<proteinExistence type="inferred from homology"/>